<protein>
    <recommendedName>
        <fullName evidence="1">Chaperone protein DnaK</fullName>
    </recommendedName>
    <alternativeName>
        <fullName evidence="1">HSP70</fullName>
    </alternativeName>
    <alternativeName>
        <fullName evidence="1">Heat shock 70 kDa protein</fullName>
    </alternativeName>
    <alternativeName>
        <fullName evidence="1">Heat shock protein 70</fullName>
    </alternativeName>
</protein>
<comment type="function">
    <text evidence="1">Acts as a chaperone.</text>
</comment>
<comment type="induction">
    <text evidence="1">By stress conditions e.g. heat shock.</text>
</comment>
<comment type="similarity">
    <text evidence="1">Belongs to the heat shock protein 70 family.</text>
</comment>
<organism>
    <name type="scientific">Mycobacterium sp. (strain MCS)</name>
    <dbReference type="NCBI Taxonomy" id="164756"/>
    <lineage>
        <taxon>Bacteria</taxon>
        <taxon>Bacillati</taxon>
        <taxon>Actinomycetota</taxon>
        <taxon>Actinomycetes</taxon>
        <taxon>Mycobacteriales</taxon>
        <taxon>Mycobacteriaceae</taxon>
        <taxon>Mycobacterium</taxon>
    </lineage>
</organism>
<dbReference type="EMBL" id="CP000384">
    <property type="protein sequence ID" value="ABG06583.1"/>
    <property type="molecule type" value="Genomic_DNA"/>
</dbReference>
<dbReference type="SMR" id="Q1BEV1"/>
<dbReference type="KEGG" id="mmc:Mmcs_0462"/>
<dbReference type="HOGENOM" id="CLU_005965_2_4_11"/>
<dbReference type="BioCyc" id="MSP164756:G1G6O-472-MONOMER"/>
<dbReference type="GO" id="GO:0005524">
    <property type="term" value="F:ATP binding"/>
    <property type="evidence" value="ECO:0007669"/>
    <property type="project" value="UniProtKB-UniRule"/>
</dbReference>
<dbReference type="GO" id="GO:0140662">
    <property type="term" value="F:ATP-dependent protein folding chaperone"/>
    <property type="evidence" value="ECO:0007669"/>
    <property type="project" value="InterPro"/>
</dbReference>
<dbReference type="GO" id="GO:0051082">
    <property type="term" value="F:unfolded protein binding"/>
    <property type="evidence" value="ECO:0007669"/>
    <property type="project" value="InterPro"/>
</dbReference>
<dbReference type="CDD" id="cd10234">
    <property type="entry name" value="ASKHA_NBD_HSP70_DnaK-like"/>
    <property type="match status" value="1"/>
</dbReference>
<dbReference type="FunFam" id="2.60.34.10:FF:000014">
    <property type="entry name" value="Chaperone protein DnaK HSP70"/>
    <property type="match status" value="1"/>
</dbReference>
<dbReference type="FunFam" id="1.20.1270.10:FF:000001">
    <property type="entry name" value="Molecular chaperone DnaK"/>
    <property type="match status" value="1"/>
</dbReference>
<dbReference type="FunFam" id="3.30.420.40:FF:000071">
    <property type="entry name" value="Molecular chaperone DnaK"/>
    <property type="match status" value="1"/>
</dbReference>
<dbReference type="FunFam" id="3.90.640.10:FF:000003">
    <property type="entry name" value="Molecular chaperone DnaK"/>
    <property type="match status" value="1"/>
</dbReference>
<dbReference type="Gene3D" id="1.20.1270.10">
    <property type="match status" value="1"/>
</dbReference>
<dbReference type="Gene3D" id="3.30.420.40">
    <property type="match status" value="3"/>
</dbReference>
<dbReference type="Gene3D" id="3.90.640.10">
    <property type="entry name" value="Actin, Chain A, domain 4"/>
    <property type="match status" value="1"/>
</dbReference>
<dbReference type="Gene3D" id="2.60.34.10">
    <property type="entry name" value="Substrate Binding Domain Of DNAk, Chain A, domain 1"/>
    <property type="match status" value="1"/>
</dbReference>
<dbReference type="HAMAP" id="MF_00332">
    <property type="entry name" value="DnaK"/>
    <property type="match status" value="1"/>
</dbReference>
<dbReference type="InterPro" id="IPR043129">
    <property type="entry name" value="ATPase_NBD"/>
</dbReference>
<dbReference type="InterPro" id="IPR012725">
    <property type="entry name" value="Chaperone_DnaK"/>
</dbReference>
<dbReference type="InterPro" id="IPR018181">
    <property type="entry name" value="Heat_shock_70_CS"/>
</dbReference>
<dbReference type="InterPro" id="IPR029048">
    <property type="entry name" value="HSP70_C_sf"/>
</dbReference>
<dbReference type="InterPro" id="IPR029047">
    <property type="entry name" value="HSP70_peptide-bd_sf"/>
</dbReference>
<dbReference type="InterPro" id="IPR013126">
    <property type="entry name" value="Hsp_70_fam"/>
</dbReference>
<dbReference type="NCBIfam" id="NF001413">
    <property type="entry name" value="PRK00290.1"/>
    <property type="match status" value="1"/>
</dbReference>
<dbReference type="NCBIfam" id="TIGR02350">
    <property type="entry name" value="prok_dnaK"/>
    <property type="match status" value="1"/>
</dbReference>
<dbReference type="PANTHER" id="PTHR19375">
    <property type="entry name" value="HEAT SHOCK PROTEIN 70KDA"/>
    <property type="match status" value="1"/>
</dbReference>
<dbReference type="Pfam" id="PF00012">
    <property type="entry name" value="HSP70"/>
    <property type="match status" value="2"/>
</dbReference>
<dbReference type="PRINTS" id="PR00301">
    <property type="entry name" value="HEATSHOCK70"/>
</dbReference>
<dbReference type="SUPFAM" id="SSF53067">
    <property type="entry name" value="Actin-like ATPase domain"/>
    <property type="match status" value="2"/>
</dbReference>
<dbReference type="SUPFAM" id="SSF100934">
    <property type="entry name" value="Heat shock protein 70kD (HSP70), C-terminal subdomain"/>
    <property type="match status" value="1"/>
</dbReference>
<dbReference type="SUPFAM" id="SSF100920">
    <property type="entry name" value="Heat shock protein 70kD (HSP70), peptide-binding domain"/>
    <property type="match status" value="1"/>
</dbReference>
<dbReference type="PROSITE" id="PS00297">
    <property type="entry name" value="HSP70_1"/>
    <property type="match status" value="1"/>
</dbReference>
<dbReference type="PROSITE" id="PS00329">
    <property type="entry name" value="HSP70_2"/>
    <property type="match status" value="1"/>
</dbReference>
<dbReference type="PROSITE" id="PS01036">
    <property type="entry name" value="HSP70_3"/>
    <property type="match status" value="1"/>
</dbReference>
<gene>
    <name evidence="1" type="primary">dnaK</name>
    <name type="ordered locus">Mmcs_0462</name>
</gene>
<name>DNAK_MYCSS</name>
<reference key="1">
    <citation type="submission" date="2006-06" db="EMBL/GenBank/DDBJ databases">
        <title>Complete sequence of chromosome of Mycobacterium sp. MCS.</title>
        <authorList>
            <consortium name="US DOE Joint Genome Institute"/>
            <person name="Copeland A."/>
            <person name="Lucas S."/>
            <person name="Lapidus A."/>
            <person name="Barry K."/>
            <person name="Detter J.C."/>
            <person name="Glavina del Rio T."/>
            <person name="Hammon N."/>
            <person name="Israni S."/>
            <person name="Dalin E."/>
            <person name="Tice H."/>
            <person name="Pitluck S."/>
            <person name="Martinez M."/>
            <person name="Schmutz J."/>
            <person name="Larimer F."/>
            <person name="Land M."/>
            <person name="Hauser L."/>
            <person name="Kyrpides N."/>
            <person name="Kim E."/>
            <person name="Miller C.D."/>
            <person name="Hughes J.E."/>
            <person name="Anderson A.J."/>
            <person name="Sims R.C."/>
            <person name="Richardson P."/>
        </authorList>
    </citation>
    <scope>NUCLEOTIDE SEQUENCE [LARGE SCALE GENOMIC DNA]</scope>
    <source>
        <strain>MCS</strain>
    </source>
</reference>
<feature type="chain" id="PRO_1000059610" description="Chaperone protein DnaK">
    <location>
        <begin position="1"/>
        <end position="622"/>
    </location>
</feature>
<feature type="region of interest" description="Disordered" evidence="2">
    <location>
        <begin position="494"/>
        <end position="513"/>
    </location>
</feature>
<feature type="region of interest" description="Disordered" evidence="2">
    <location>
        <begin position="588"/>
        <end position="622"/>
    </location>
</feature>
<feature type="compositionally biased region" description="Basic and acidic residues" evidence="2">
    <location>
        <begin position="494"/>
        <end position="511"/>
    </location>
</feature>
<feature type="compositionally biased region" description="Acidic residues" evidence="2">
    <location>
        <begin position="605"/>
        <end position="622"/>
    </location>
</feature>
<feature type="modified residue" description="Phosphothreonine; by autocatalysis" evidence="1">
    <location>
        <position position="175"/>
    </location>
</feature>
<proteinExistence type="inferred from homology"/>
<keyword id="KW-0067">ATP-binding</keyword>
<keyword id="KW-0143">Chaperone</keyword>
<keyword id="KW-0547">Nucleotide-binding</keyword>
<keyword id="KW-0597">Phosphoprotein</keyword>
<keyword id="KW-0346">Stress response</keyword>
<accession>Q1BEV1</accession>
<evidence type="ECO:0000255" key="1">
    <source>
        <dbReference type="HAMAP-Rule" id="MF_00332"/>
    </source>
</evidence>
<evidence type="ECO:0000256" key="2">
    <source>
        <dbReference type="SAM" id="MobiDB-lite"/>
    </source>
</evidence>
<sequence length="622" mass="66581">MARAVGIDLGTTNSVVAVLEGGDPVVVANSEGSRTTPSVVAFARNGEVLVGQPAKNQAVTNVDRTIRSVKRHMGTDWNTEIDGKKYTAQEISARTLMKLKRDAESYLGEDITDAVITVPAYFNDAQRQATKEAGQIAGLNVLRIVNEPTAAALAYGLDKGEKEQTILVFDLGGGTFDVSLLEIGEGVVEVRATSGDNHLGGDDWDERVVTWLVDKFKASSGIDLTKDKMAMQRLREAAEKAKIELSSSQSTSINLPYITVDADKNPLFLDEQLTRAEFQRITQDLLDRTRQPFQSVIKDAGISVGDIDHVVLVGGSTRMPAVSELVKEMTGGKEPNKGVNPDEVVAVGAALQAGVLKGEVKDVLLLDVTPLSLGIETKGGVMTKLIERNTTIPTKRSETFTTADDNQPSVQIQVFQGEREIASHNKLLGSFELTGIPPAPRGVPQIEVTFDIDANGIVHVTAKDKGTGKENTIRIQEGSGLSKEEIDRMIKDAEAHADEDRKRREEADVRNQAETLVYQTEKFVKEQREAEGGSKVPEDVLTKVDGAISEAKTALAGTDIGAIKAAMEKLGTESQALGQAIYEATQAEQAAGGGAGGADGSSSSSDDDVVDAEVVDDDRENK</sequence>